<keyword id="KW-0378">Hydrolase</keyword>
<keyword id="KW-0479">Metal-binding</keyword>
<keyword id="KW-0482">Metalloprotease</keyword>
<keyword id="KW-0645">Protease</keyword>
<keyword id="KW-0862">Zinc</keyword>
<gene>
    <name type="ordered locus">YPTB0046</name>
</gene>
<evidence type="ECO:0000255" key="1">
    <source>
        <dbReference type="HAMAP-Rule" id="MF_00018"/>
    </source>
</evidence>
<evidence type="ECO:0000255" key="2">
    <source>
        <dbReference type="PROSITE-ProRule" id="PRU01182"/>
    </source>
</evidence>
<protein>
    <recommendedName>
        <fullName evidence="1">UPF0758 protein YPTB0046</fullName>
    </recommendedName>
</protein>
<proteinExistence type="inferred from homology"/>
<dbReference type="EMBL" id="BX936398">
    <property type="protein sequence ID" value="CAH19286.1"/>
    <property type="molecule type" value="Genomic_DNA"/>
</dbReference>
<dbReference type="SMR" id="Q66GD6"/>
<dbReference type="KEGG" id="ypo:BZ17_2549"/>
<dbReference type="KEGG" id="yps:YPTB0046"/>
<dbReference type="PATRIC" id="fig|273123.14.peg.2674"/>
<dbReference type="Proteomes" id="UP000001011">
    <property type="component" value="Chromosome"/>
</dbReference>
<dbReference type="GO" id="GO:0046872">
    <property type="term" value="F:metal ion binding"/>
    <property type="evidence" value="ECO:0007669"/>
    <property type="project" value="UniProtKB-KW"/>
</dbReference>
<dbReference type="GO" id="GO:0008237">
    <property type="term" value="F:metallopeptidase activity"/>
    <property type="evidence" value="ECO:0007669"/>
    <property type="project" value="UniProtKB-KW"/>
</dbReference>
<dbReference type="GO" id="GO:0006508">
    <property type="term" value="P:proteolysis"/>
    <property type="evidence" value="ECO:0007669"/>
    <property type="project" value="UniProtKB-KW"/>
</dbReference>
<dbReference type="CDD" id="cd08071">
    <property type="entry name" value="MPN_DUF2466"/>
    <property type="match status" value="1"/>
</dbReference>
<dbReference type="Gene3D" id="3.40.140.10">
    <property type="entry name" value="Cytidine Deaminase, domain 2"/>
    <property type="match status" value="1"/>
</dbReference>
<dbReference type="HAMAP" id="MF_00018">
    <property type="entry name" value="UPF0758_YicR"/>
    <property type="match status" value="1"/>
</dbReference>
<dbReference type="InterPro" id="IPR037518">
    <property type="entry name" value="MPN"/>
</dbReference>
<dbReference type="InterPro" id="IPR025657">
    <property type="entry name" value="RadC_JAB"/>
</dbReference>
<dbReference type="InterPro" id="IPR010994">
    <property type="entry name" value="RuvA_2-like"/>
</dbReference>
<dbReference type="InterPro" id="IPR001405">
    <property type="entry name" value="UPF0758"/>
</dbReference>
<dbReference type="InterPro" id="IPR020891">
    <property type="entry name" value="UPF0758_CS"/>
</dbReference>
<dbReference type="InterPro" id="IPR046778">
    <property type="entry name" value="UPF0758_N"/>
</dbReference>
<dbReference type="InterPro" id="IPR022820">
    <property type="entry name" value="UPF0758_YicR"/>
</dbReference>
<dbReference type="NCBIfam" id="NF000642">
    <property type="entry name" value="PRK00024.1"/>
    <property type="match status" value="1"/>
</dbReference>
<dbReference type="NCBIfam" id="TIGR00608">
    <property type="entry name" value="radc"/>
    <property type="match status" value="1"/>
</dbReference>
<dbReference type="PANTHER" id="PTHR30471">
    <property type="entry name" value="DNA REPAIR PROTEIN RADC"/>
    <property type="match status" value="1"/>
</dbReference>
<dbReference type="PANTHER" id="PTHR30471:SF3">
    <property type="entry name" value="UPF0758 PROTEIN YEES-RELATED"/>
    <property type="match status" value="1"/>
</dbReference>
<dbReference type="Pfam" id="PF04002">
    <property type="entry name" value="RadC"/>
    <property type="match status" value="1"/>
</dbReference>
<dbReference type="Pfam" id="PF20582">
    <property type="entry name" value="UPF0758_N"/>
    <property type="match status" value="1"/>
</dbReference>
<dbReference type="SUPFAM" id="SSF47781">
    <property type="entry name" value="RuvA domain 2-like"/>
    <property type="match status" value="1"/>
</dbReference>
<dbReference type="PROSITE" id="PS50249">
    <property type="entry name" value="MPN"/>
    <property type="match status" value="1"/>
</dbReference>
<dbReference type="PROSITE" id="PS01302">
    <property type="entry name" value="UPF0758"/>
    <property type="match status" value="1"/>
</dbReference>
<sequence length="222" mass="24814">MDEWYGQVAPREKLLKYGAAVLTDAELLAIFLRTGIPGMHVMKMAEYLIETFGSLHGLISADYQTLCAHKGIGASKYSQIQAIGELACRCFSSHLMRESVLLNPGITQKFLQNILSHREREIFLVVFLDNQHRVIRHEEMFTGTISSVEVHPREIVREALKVNAAALILAHNHPSGKAEPSQADRLITTQVIKACSLLDIRVLDHLVVGRGECVSFAERGWL</sequence>
<organism>
    <name type="scientific">Yersinia pseudotuberculosis serotype I (strain IP32953)</name>
    <dbReference type="NCBI Taxonomy" id="273123"/>
    <lineage>
        <taxon>Bacteria</taxon>
        <taxon>Pseudomonadati</taxon>
        <taxon>Pseudomonadota</taxon>
        <taxon>Gammaproteobacteria</taxon>
        <taxon>Enterobacterales</taxon>
        <taxon>Yersiniaceae</taxon>
        <taxon>Yersinia</taxon>
    </lineage>
</organism>
<feature type="chain" id="PRO_0000190759" description="UPF0758 protein YPTB0046">
    <location>
        <begin position="1"/>
        <end position="222"/>
    </location>
</feature>
<feature type="domain" description="MPN" evidence="2">
    <location>
        <begin position="100"/>
        <end position="222"/>
    </location>
</feature>
<feature type="short sequence motif" description="JAMM motif" evidence="2">
    <location>
        <begin position="171"/>
        <end position="184"/>
    </location>
</feature>
<feature type="binding site" evidence="2">
    <location>
        <position position="171"/>
    </location>
    <ligand>
        <name>Zn(2+)</name>
        <dbReference type="ChEBI" id="CHEBI:29105"/>
        <note>catalytic</note>
    </ligand>
</feature>
<feature type="binding site" evidence="2">
    <location>
        <position position="173"/>
    </location>
    <ligand>
        <name>Zn(2+)</name>
        <dbReference type="ChEBI" id="CHEBI:29105"/>
        <note>catalytic</note>
    </ligand>
</feature>
<feature type="binding site" evidence="2">
    <location>
        <position position="184"/>
    </location>
    <ligand>
        <name>Zn(2+)</name>
        <dbReference type="ChEBI" id="CHEBI:29105"/>
        <note>catalytic</note>
    </ligand>
</feature>
<comment type="similarity">
    <text evidence="1">Belongs to the UPF0758 family. YicR subfamily.</text>
</comment>
<reference key="1">
    <citation type="journal article" date="2004" name="Proc. Natl. Acad. Sci. U.S.A.">
        <title>Insights into the evolution of Yersinia pestis through whole-genome comparison with Yersinia pseudotuberculosis.</title>
        <authorList>
            <person name="Chain P.S.G."/>
            <person name="Carniel E."/>
            <person name="Larimer F.W."/>
            <person name="Lamerdin J."/>
            <person name="Stoutland P.O."/>
            <person name="Regala W.M."/>
            <person name="Georgescu A.M."/>
            <person name="Vergez L.M."/>
            <person name="Land M.L."/>
            <person name="Motin V.L."/>
            <person name="Brubaker R.R."/>
            <person name="Fowler J."/>
            <person name="Hinnebusch J."/>
            <person name="Marceau M."/>
            <person name="Medigue C."/>
            <person name="Simonet M."/>
            <person name="Chenal-Francisque V."/>
            <person name="Souza B."/>
            <person name="Dacheux D."/>
            <person name="Elliott J.M."/>
            <person name="Derbise A."/>
            <person name="Hauser L.J."/>
            <person name="Garcia E."/>
        </authorList>
    </citation>
    <scope>NUCLEOTIDE SEQUENCE [LARGE SCALE GENOMIC DNA]</scope>
    <source>
        <strain>IP32953</strain>
    </source>
</reference>
<accession>Q66GD6</accession>
<name>Y046_YERPS</name>